<gene>
    <name type="primary">Trappc13</name>
</gene>
<keyword id="KW-1185">Reference proteome</keyword>
<proteinExistence type="evidence at transcript level"/>
<organism>
    <name type="scientific">Rattus norvegicus</name>
    <name type="common">Rat</name>
    <dbReference type="NCBI Taxonomy" id="10116"/>
    <lineage>
        <taxon>Eukaryota</taxon>
        <taxon>Metazoa</taxon>
        <taxon>Chordata</taxon>
        <taxon>Craniata</taxon>
        <taxon>Vertebrata</taxon>
        <taxon>Euteleostomi</taxon>
        <taxon>Mammalia</taxon>
        <taxon>Eutheria</taxon>
        <taxon>Euarchontoglires</taxon>
        <taxon>Glires</taxon>
        <taxon>Rodentia</taxon>
        <taxon>Myomorpha</taxon>
        <taxon>Muroidea</taxon>
        <taxon>Muridae</taxon>
        <taxon>Murinae</taxon>
        <taxon>Rattus</taxon>
    </lineage>
</organism>
<name>TPC13_RAT</name>
<accession>Q5M887</accession>
<reference key="1">
    <citation type="journal article" date="2004" name="Genome Res.">
        <title>The status, quality, and expansion of the NIH full-length cDNA project: the Mammalian Gene Collection (MGC).</title>
        <authorList>
            <consortium name="The MGC Project Team"/>
        </authorList>
    </citation>
    <scope>NUCLEOTIDE SEQUENCE [LARGE SCALE MRNA]</scope>
    <source>
        <tissue>Liver</tissue>
    </source>
</reference>
<sequence length="418" mass="46520">MEVNPPKQEHLLALKVMRLTKPTLFTNIPVTCEEKDLPGDLFNQLMKDDPSTVNGAEILMLGEMLTLPQNFGNIFLGETFSSYISVHNDSNQVVKDILVKADLQTSSQRLNLSASNAAVAELKPDCCIDDVIHHEVKEIGTHILVCAVSYTTQGGEKMYFRKFFKFQVLKPLDVKTKFYNAESDLSSVTDEVFLEAQIQNITTSPMFMEKVSLEPSIMYNVTELNSVNQAGECVSTFGSRGYLQPMDTRQYLYCLKPKKEFAEKAGIIKGVTVIGKLDIVWKTNLGERGRLQTSQLQRMAPGYGDVRLSLEAIPDTVNLEEPFHITCKITNCSSERTMDLVLEMCNTTSIHWCGISGRQLGKLHPSSSLCLALTLLSSVQGLQSVSGLRLTDTFLKRTYEYDDIAQVCVVSAAVEVEA</sequence>
<comment type="subunit">
    <text evidence="1">Part of the multisubunit TRAPP (transport protein particle) complex.</text>
</comment>
<comment type="similarity">
    <text evidence="2">Belongs to the TRAPPC13 family.</text>
</comment>
<comment type="sequence caution" evidence="2">
    <conflict type="erroneous initiation">
        <sequence resource="EMBL-CDS" id="AAH88172"/>
    </conflict>
    <text>Truncated N-terminus.</text>
</comment>
<dbReference type="EMBL" id="BC088172">
    <property type="protein sequence ID" value="AAH88172.1"/>
    <property type="status" value="ALT_INIT"/>
    <property type="molecule type" value="mRNA"/>
</dbReference>
<dbReference type="RefSeq" id="NP_001013930.2">
    <property type="nucleotide sequence ID" value="NM_001013908.2"/>
</dbReference>
<dbReference type="FunCoup" id="Q5M887">
    <property type="interactions" value="2781"/>
</dbReference>
<dbReference type="STRING" id="10116.ENSRNOP00000016439"/>
<dbReference type="iPTMnet" id="Q5M887"/>
<dbReference type="PhosphoSitePlus" id="Q5M887"/>
<dbReference type="PaxDb" id="10116-ENSRNOP00000016439"/>
<dbReference type="Ensembl" id="ENSRNOT00000110804.1">
    <property type="protein sequence ID" value="ENSRNOP00000077296.1"/>
    <property type="gene ID" value="ENSRNOG00000012124.8"/>
</dbReference>
<dbReference type="GeneID" id="294709"/>
<dbReference type="KEGG" id="rno:294709"/>
<dbReference type="UCSC" id="RGD:1306583">
    <property type="organism name" value="rat"/>
</dbReference>
<dbReference type="AGR" id="RGD:1306583"/>
<dbReference type="CTD" id="80006"/>
<dbReference type="RGD" id="1306583">
    <property type="gene designation" value="Trappc13"/>
</dbReference>
<dbReference type="eggNOG" id="KOG2625">
    <property type="taxonomic scope" value="Eukaryota"/>
</dbReference>
<dbReference type="GeneTree" id="ENSGT00390000015280"/>
<dbReference type="HOGENOM" id="CLU_027041_0_0_1"/>
<dbReference type="InParanoid" id="Q5M887"/>
<dbReference type="OrthoDB" id="33989at9989"/>
<dbReference type="PhylomeDB" id="Q5M887"/>
<dbReference type="TreeFam" id="TF314898"/>
<dbReference type="Reactome" id="R-RNO-8876198">
    <property type="pathway name" value="RAB GEFs exchange GTP for GDP on RABs"/>
</dbReference>
<dbReference type="PRO" id="PR:Q5M887"/>
<dbReference type="Proteomes" id="UP000002494">
    <property type="component" value="Chromosome 2"/>
</dbReference>
<dbReference type="Bgee" id="ENSRNOG00000012124">
    <property type="expression patterns" value="Expressed in ovary and 20 other cell types or tissues"/>
</dbReference>
<dbReference type="GO" id="GO:1990072">
    <property type="term" value="C:TRAPPIII protein complex"/>
    <property type="evidence" value="ECO:0000318"/>
    <property type="project" value="GO_Central"/>
</dbReference>
<dbReference type="InterPro" id="IPR010378">
    <property type="entry name" value="TRAPPC13"/>
</dbReference>
<dbReference type="InterPro" id="IPR055428">
    <property type="entry name" value="TRAPPC13_C"/>
</dbReference>
<dbReference type="InterPro" id="IPR055429">
    <property type="entry name" value="TRAPPC13_M"/>
</dbReference>
<dbReference type="InterPro" id="IPR055427">
    <property type="entry name" value="TRAPPC13_N"/>
</dbReference>
<dbReference type="PANTHER" id="PTHR13134">
    <property type="entry name" value="TRAFFICKING PROTEIN PARTICLE COMPLEX SUBUNIT 13"/>
    <property type="match status" value="1"/>
</dbReference>
<dbReference type="PANTHER" id="PTHR13134:SF3">
    <property type="entry name" value="TRAFFICKING PROTEIN PARTICLE COMPLEX SUBUNIT 13"/>
    <property type="match status" value="1"/>
</dbReference>
<dbReference type="Pfam" id="PF23643">
    <property type="entry name" value="TRAPPC13_C"/>
    <property type="match status" value="1"/>
</dbReference>
<dbReference type="Pfam" id="PF23647">
    <property type="entry name" value="TRAPPC13_M"/>
    <property type="match status" value="1"/>
</dbReference>
<dbReference type="Pfam" id="PF06159">
    <property type="entry name" value="TRAPPC13_N"/>
    <property type="match status" value="1"/>
</dbReference>
<feature type="chain" id="PRO_0000321550" description="Trafficking protein particle complex subunit 13">
    <location>
        <begin position="1"/>
        <end position="418"/>
    </location>
</feature>
<protein>
    <recommendedName>
        <fullName>Trafficking protein particle complex subunit 13</fullName>
    </recommendedName>
</protein>
<evidence type="ECO:0000250" key="1"/>
<evidence type="ECO:0000305" key="2"/>